<sequence>MIQISDTAKSHFLKLIQREGVPGMGVRLSAVDPGTPRADARLEFADPSELVGDEWLIDCGDFTLYVASASVAWLDGAEIDYVTQATGSQQLIIKAPKIKGQELSQVASLVERVCWVVENEINPQLASHGGRVEVQEVSAEGVVLLRFGGGCHGCGMADVTLKQGVEKTLMERVHGVIAVRDATDHSTGAAPYISRDFSP</sequence>
<accession>B0U5V3</accession>
<protein>
    <recommendedName>
        <fullName evidence="1">Fe/S biogenesis protein NfuA</fullName>
    </recommendedName>
</protein>
<comment type="function">
    <text evidence="1">Involved in iron-sulfur cluster biogenesis. Binds a 4Fe-4S cluster, can transfer this cluster to apoproteins, and thereby intervenes in the maturation of Fe/S proteins. Could also act as a scaffold/chaperone for damaged Fe/S proteins.</text>
</comment>
<comment type="cofactor">
    <cofactor evidence="1">
        <name>[4Fe-4S] cluster</name>
        <dbReference type="ChEBI" id="CHEBI:49883"/>
    </cofactor>
    <text evidence="1">Binds 1 [4Fe-4S] cluster per subunit. The cluster is presumably bound at the interface of two monomers.</text>
</comment>
<comment type="subunit">
    <text evidence="1">Homodimer.</text>
</comment>
<comment type="similarity">
    <text evidence="1">Belongs to the NfuA family.</text>
</comment>
<evidence type="ECO:0000255" key="1">
    <source>
        <dbReference type="HAMAP-Rule" id="MF_01637"/>
    </source>
</evidence>
<name>NFUA_XYLFM</name>
<dbReference type="EMBL" id="CP000941">
    <property type="protein sequence ID" value="ACA13025.1"/>
    <property type="molecule type" value="Genomic_DNA"/>
</dbReference>
<dbReference type="RefSeq" id="WP_004084669.1">
    <property type="nucleotide sequence ID" value="NC_010513.1"/>
</dbReference>
<dbReference type="SMR" id="B0U5V3"/>
<dbReference type="KEGG" id="xfm:Xfasm12_2172"/>
<dbReference type="HOGENOM" id="CLU_094569_0_0_6"/>
<dbReference type="GO" id="GO:0051539">
    <property type="term" value="F:4 iron, 4 sulfur cluster binding"/>
    <property type="evidence" value="ECO:0007669"/>
    <property type="project" value="UniProtKB-UniRule"/>
</dbReference>
<dbReference type="GO" id="GO:0005506">
    <property type="term" value="F:iron ion binding"/>
    <property type="evidence" value="ECO:0007669"/>
    <property type="project" value="InterPro"/>
</dbReference>
<dbReference type="GO" id="GO:0016226">
    <property type="term" value="P:iron-sulfur cluster assembly"/>
    <property type="evidence" value="ECO:0007669"/>
    <property type="project" value="UniProtKB-UniRule"/>
</dbReference>
<dbReference type="GO" id="GO:0051604">
    <property type="term" value="P:protein maturation"/>
    <property type="evidence" value="ECO:0007669"/>
    <property type="project" value="UniProtKB-UniRule"/>
</dbReference>
<dbReference type="Gene3D" id="3.30.300.130">
    <property type="entry name" value="Fe-S cluster assembly (FSCA)"/>
    <property type="match status" value="1"/>
</dbReference>
<dbReference type="Gene3D" id="2.60.300.12">
    <property type="entry name" value="HesB-like domain"/>
    <property type="match status" value="1"/>
</dbReference>
<dbReference type="HAMAP" id="MF_01637">
    <property type="entry name" value="Fe_S_biogen_NfuA"/>
    <property type="match status" value="1"/>
</dbReference>
<dbReference type="InterPro" id="IPR017726">
    <property type="entry name" value="Fe/S_biogenesis_protein_NfuA"/>
</dbReference>
<dbReference type="InterPro" id="IPR034904">
    <property type="entry name" value="FSCA_dom_sf"/>
</dbReference>
<dbReference type="InterPro" id="IPR035903">
    <property type="entry name" value="HesB-like_dom_sf"/>
</dbReference>
<dbReference type="InterPro" id="IPR001075">
    <property type="entry name" value="NIF_FeS_clus_asmbl_NifU_C"/>
</dbReference>
<dbReference type="PANTHER" id="PTHR11178:SF51">
    <property type="entry name" value="FE_S BIOGENESIS PROTEIN NFUA"/>
    <property type="match status" value="1"/>
</dbReference>
<dbReference type="PANTHER" id="PTHR11178">
    <property type="entry name" value="IRON-SULFUR CLUSTER SCAFFOLD PROTEIN NFU-RELATED"/>
    <property type="match status" value="1"/>
</dbReference>
<dbReference type="Pfam" id="PF01106">
    <property type="entry name" value="NifU"/>
    <property type="match status" value="1"/>
</dbReference>
<dbReference type="SUPFAM" id="SSF117916">
    <property type="entry name" value="Fe-S cluster assembly (FSCA) domain-like"/>
    <property type="match status" value="1"/>
</dbReference>
<dbReference type="SUPFAM" id="SSF89360">
    <property type="entry name" value="HesB-like domain"/>
    <property type="match status" value="1"/>
</dbReference>
<gene>
    <name evidence="1" type="primary">nfuA</name>
    <name type="ordered locus">Xfasm12_2172</name>
</gene>
<keyword id="KW-0004">4Fe-4S</keyword>
<keyword id="KW-0408">Iron</keyword>
<keyword id="KW-0411">Iron-sulfur</keyword>
<keyword id="KW-0479">Metal-binding</keyword>
<organism>
    <name type="scientific">Xylella fastidiosa (strain M12)</name>
    <dbReference type="NCBI Taxonomy" id="405440"/>
    <lineage>
        <taxon>Bacteria</taxon>
        <taxon>Pseudomonadati</taxon>
        <taxon>Pseudomonadota</taxon>
        <taxon>Gammaproteobacteria</taxon>
        <taxon>Lysobacterales</taxon>
        <taxon>Lysobacteraceae</taxon>
        <taxon>Xylella</taxon>
    </lineage>
</organism>
<proteinExistence type="inferred from homology"/>
<reference key="1">
    <citation type="journal article" date="2010" name="J. Bacteriol.">
        <title>Whole genome sequences of two Xylella fastidiosa strains (M12 and M23) causing almond leaf scorch disease in California.</title>
        <authorList>
            <person name="Chen J."/>
            <person name="Xie G."/>
            <person name="Han S."/>
            <person name="Chertkov O."/>
            <person name="Sims D."/>
            <person name="Civerolo E.L."/>
        </authorList>
    </citation>
    <scope>NUCLEOTIDE SEQUENCE [LARGE SCALE GENOMIC DNA]</scope>
    <source>
        <strain>M12</strain>
    </source>
</reference>
<feature type="chain" id="PRO_1000186794" description="Fe/S biogenesis protein NfuA">
    <location>
        <begin position="1"/>
        <end position="199"/>
    </location>
</feature>
<feature type="binding site" evidence="1">
    <location>
        <position position="151"/>
    </location>
    <ligand>
        <name>[4Fe-4S] cluster</name>
        <dbReference type="ChEBI" id="CHEBI:49883"/>
    </ligand>
</feature>
<feature type="binding site" evidence="1">
    <location>
        <position position="154"/>
    </location>
    <ligand>
        <name>[4Fe-4S] cluster</name>
        <dbReference type="ChEBI" id="CHEBI:49883"/>
    </ligand>
</feature>